<reference key="1">
    <citation type="journal article" date="1967" name="Arch. Biochem. Biophys.">
        <title>Amino acid sequence studies on artiodactyl fibrinopeptides. I. Dromedary camel, mule deer, and cape buffalo.</title>
        <authorList>
            <person name="Doolittle R.F."/>
            <person name="Schubert D."/>
            <person name="Schwartz S.A."/>
        </authorList>
    </citation>
    <scope>PROTEIN SEQUENCE</scope>
    <scope>PYROGLUTAMATE FORMATION AT GLN-1</scope>
    <scope>SULFATION AT TYR-6</scope>
</reference>
<sequence>QHLADYDEVDDDRAKLHLDAR</sequence>
<dbReference type="GO" id="GO:0005576">
    <property type="term" value="C:extracellular region"/>
    <property type="evidence" value="ECO:0007669"/>
    <property type="project" value="UniProtKB-SubCell"/>
</dbReference>
<dbReference type="GO" id="GO:0002250">
    <property type="term" value="P:adaptive immune response"/>
    <property type="evidence" value="ECO:0007669"/>
    <property type="project" value="UniProtKB-KW"/>
</dbReference>
<dbReference type="GO" id="GO:0007596">
    <property type="term" value="P:blood coagulation"/>
    <property type="evidence" value="ECO:0007669"/>
    <property type="project" value="UniProtKB-KW"/>
</dbReference>
<dbReference type="GO" id="GO:0045087">
    <property type="term" value="P:innate immune response"/>
    <property type="evidence" value="ECO:0007669"/>
    <property type="project" value="UniProtKB-KW"/>
</dbReference>
<gene>
    <name type="primary">FGB</name>
</gene>
<proteinExistence type="evidence at protein level"/>
<feature type="peptide" id="PRO_0000009080" description="Fibrinopeptide B">
    <location>
        <begin position="1"/>
        <end position="21"/>
    </location>
</feature>
<feature type="modified residue" description="Pyrrolidone carboxylic acid" evidence="3">
    <location>
        <position position="1"/>
    </location>
</feature>
<feature type="modified residue" description="Sulfotyrosine" evidence="3">
    <location>
        <position position="6"/>
    </location>
</feature>
<feature type="non-terminal residue">
    <location>
        <position position="21"/>
    </location>
</feature>
<name>FIBB_ODOHE</name>
<organism>
    <name type="scientific">Odocoileus hemionus</name>
    <name type="common">Mule deer</name>
    <name type="synonym">Cervus hemionus</name>
    <dbReference type="NCBI Taxonomy" id="9872"/>
    <lineage>
        <taxon>Eukaryota</taxon>
        <taxon>Metazoa</taxon>
        <taxon>Chordata</taxon>
        <taxon>Craniata</taxon>
        <taxon>Vertebrata</taxon>
        <taxon>Euteleostomi</taxon>
        <taxon>Mammalia</taxon>
        <taxon>Eutheria</taxon>
        <taxon>Laurasiatheria</taxon>
        <taxon>Artiodactyla</taxon>
        <taxon>Ruminantia</taxon>
        <taxon>Pecora</taxon>
        <taxon>Cervidae</taxon>
        <taxon>Odocoileinae</taxon>
        <taxon>Odocoileus</taxon>
    </lineage>
</organism>
<comment type="function">
    <text evidence="1">Cleaved by the protease thrombin to yield monomers which, together with fibrinogen alpha (FGA) and fibrinogen gamma (FGG), polymerize to form an insoluble fibrin matrix. Fibrin has a major function in hemostasis as one of the primary components of blood clots. In addition, functions during the early stages of wound repair to stabilize the lesion and guide cell migration during re-epithelialization. Was originally thought to be essential for platelet aggregation, based on in vitro studies using anticoagulated blood. However subsequent studies have shown that it is not absolutely required for thrombus formation in vivo. Enhances expression of SELP in activated platelets. Maternal fibrinogen is essential for successful pregnancy. Fibrin deposition is also associated with infection, where it protects against IFNG-mediated hemorrhage. May also facilitate the antibacterial immune response via both innate and T-cell mediated pathways.</text>
</comment>
<comment type="subunit">
    <text evidence="2">Heterohexamer; disulfide linked. Contains 2 sets of 3 non-identical chains (alpha, beta and gamma). The 2 heterotrimers are in head to head conformation with the N-termini in a small central domain (By similarity).</text>
</comment>
<comment type="subcellular location">
    <subcellularLocation>
        <location>Secreted</location>
    </subcellularLocation>
</comment>
<comment type="domain">
    <text evidence="2">A long coiled coil structure formed by 3 polypeptide chains connects the central nodule to the C-terminal domains (distal nodules). The long C-terminal ends of the alpha chains fold back, contributing a fourth strand to the coiled coil structure.</text>
</comment>
<comment type="PTM">
    <text>Conversion of fibrinogen to fibrin is triggered by thrombin, which cleaves fibrinopeptides A and B from alpha and beta chains, and thus exposes the N-terminal polymerization sites responsible for the formation of the soft clot.</text>
</comment>
<evidence type="ECO:0000250" key="1">
    <source>
        <dbReference type="UniProtKB" id="E9PV24"/>
    </source>
</evidence>
<evidence type="ECO:0000250" key="2">
    <source>
        <dbReference type="UniProtKB" id="P02675"/>
    </source>
</evidence>
<evidence type="ECO:0000269" key="3">
    <source>
    </source>
</evidence>
<accession>P14476</accession>
<keyword id="KW-1064">Adaptive immunity</keyword>
<keyword id="KW-0094">Blood coagulation</keyword>
<keyword id="KW-0175">Coiled coil</keyword>
<keyword id="KW-0903">Direct protein sequencing</keyword>
<keyword id="KW-1015">Disulfide bond</keyword>
<keyword id="KW-0356">Hemostasis</keyword>
<keyword id="KW-0391">Immunity</keyword>
<keyword id="KW-0399">Innate immunity</keyword>
<keyword id="KW-0873">Pyrrolidone carboxylic acid</keyword>
<keyword id="KW-0964">Secreted</keyword>
<keyword id="KW-0765">Sulfation</keyword>
<protein>
    <recommendedName>
        <fullName>Fibrinogen beta chain</fullName>
    </recommendedName>
    <component>
        <recommendedName>
            <fullName>Fibrinopeptide B</fullName>
        </recommendedName>
    </component>
</protein>